<dbReference type="EMBL" id="BA000002">
    <property type="protein sequence ID" value="BAA79756.1"/>
    <property type="molecule type" value="Genomic_DNA"/>
</dbReference>
<dbReference type="PIR" id="D72669">
    <property type="entry name" value="D72669"/>
</dbReference>
<dbReference type="RefSeq" id="WP_010865967.1">
    <property type="nucleotide sequence ID" value="NC_000854.2"/>
</dbReference>
<dbReference type="SMR" id="Q9YDZ1"/>
<dbReference type="STRING" id="272557.APE_0778"/>
<dbReference type="EnsemblBacteria" id="BAA79756">
    <property type="protein sequence ID" value="BAA79756"/>
    <property type="gene ID" value="APE_0778"/>
</dbReference>
<dbReference type="GeneID" id="1444891"/>
<dbReference type="KEGG" id="ape:APE_0778"/>
<dbReference type="eggNOG" id="arCOG04152">
    <property type="taxonomic scope" value="Archaea"/>
</dbReference>
<dbReference type="Proteomes" id="UP000002518">
    <property type="component" value="Chromosome"/>
</dbReference>
<dbReference type="GO" id="GO:0003677">
    <property type="term" value="F:DNA binding"/>
    <property type="evidence" value="ECO:0007669"/>
    <property type="project" value="UniProtKB-KW"/>
</dbReference>
<dbReference type="GO" id="GO:0003700">
    <property type="term" value="F:DNA-binding transcription factor activity"/>
    <property type="evidence" value="ECO:0007669"/>
    <property type="project" value="UniProtKB-UniRule"/>
</dbReference>
<dbReference type="CDD" id="cd00093">
    <property type="entry name" value="HTH_XRE"/>
    <property type="match status" value="1"/>
</dbReference>
<dbReference type="Gene3D" id="1.10.260.40">
    <property type="entry name" value="lambda repressor-like DNA-binding domains"/>
    <property type="match status" value="1"/>
</dbReference>
<dbReference type="HAMAP" id="MF_00584">
    <property type="entry name" value="HTH_type_cro_C1"/>
    <property type="match status" value="1"/>
</dbReference>
<dbReference type="InterPro" id="IPR020886">
    <property type="entry name" value="Arc_TR_HTH"/>
</dbReference>
<dbReference type="InterPro" id="IPR001387">
    <property type="entry name" value="Cro/C1-type_HTH"/>
</dbReference>
<dbReference type="InterPro" id="IPR010982">
    <property type="entry name" value="Lambda_DNA-bd_dom_sf"/>
</dbReference>
<dbReference type="Pfam" id="PF01381">
    <property type="entry name" value="HTH_3"/>
    <property type="match status" value="1"/>
</dbReference>
<dbReference type="SMART" id="SM00530">
    <property type="entry name" value="HTH_XRE"/>
    <property type="match status" value="1"/>
</dbReference>
<dbReference type="SUPFAM" id="SSF47413">
    <property type="entry name" value="lambda repressor-like DNA-binding domains"/>
    <property type="match status" value="1"/>
</dbReference>
<dbReference type="PROSITE" id="PS50943">
    <property type="entry name" value="HTH_CROC1"/>
    <property type="match status" value="1"/>
</dbReference>
<sequence>MVQGLPGEFEDYLYRVIASLYRYAERLVVVDYPSSPTRRSIDLIVSLPGSRVVLIKAIYDASLISKKEVEELSAVANSLGVSAVIIAERMGREDLLTGVVYDRYGVNMVNLETFENFVSGREEVYVTRYKDIYTVSISSEKLREKRLEKGLSLGHLAYMLKTSRKSIYEYERGVMSPSVEKAEKLVDILGEEILEPIDILTSPRKPVSKRDFDKPEEALVGEKLLELGFKVSHAKRTVVDLVAGRSGEEGVGSRIMIVVKRSREGRERMMSRIMKGVKMGSILSSSLYAVVNREEKSLIKDIDYTKTIVKDVREFINDVSRGRVEENEE</sequence>
<proteinExistence type="inferred from homology"/>
<protein>
    <recommendedName>
        <fullName evidence="1">Putative HTH-type transcriptional regulatory protein APE_0778</fullName>
    </recommendedName>
</protein>
<name>Y778_AERPE</name>
<gene>
    <name type="ordered locus">APE_0778</name>
</gene>
<evidence type="ECO:0000255" key="1">
    <source>
        <dbReference type="HAMAP-Rule" id="MF_00584"/>
    </source>
</evidence>
<feature type="chain" id="PRO_0000144852" description="Putative HTH-type transcriptional regulatory protein APE_0778">
    <location>
        <begin position="1"/>
        <end position="329"/>
    </location>
</feature>
<feature type="domain" description="HTH cro/C1-type" evidence="1">
    <location>
        <begin position="142"/>
        <end position="200"/>
    </location>
</feature>
<feature type="DNA-binding region" description="H-T-H motif" evidence="1">
    <location>
        <begin position="153"/>
        <end position="172"/>
    </location>
</feature>
<accession>Q9YDZ1</accession>
<reference key="1">
    <citation type="journal article" date="1999" name="DNA Res.">
        <title>Complete genome sequence of an aerobic hyper-thermophilic crenarchaeon, Aeropyrum pernix K1.</title>
        <authorList>
            <person name="Kawarabayasi Y."/>
            <person name="Hino Y."/>
            <person name="Horikawa H."/>
            <person name="Yamazaki S."/>
            <person name="Haikawa Y."/>
            <person name="Jin-no K."/>
            <person name="Takahashi M."/>
            <person name="Sekine M."/>
            <person name="Baba S."/>
            <person name="Ankai A."/>
            <person name="Kosugi H."/>
            <person name="Hosoyama A."/>
            <person name="Fukui S."/>
            <person name="Nagai Y."/>
            <person name="Nishijima K."/>
            <person name="Nakazawa H."/>
            <person name="Takamiya M."/>
            <person name="Masuda S."/>
            <person name="Funahashi T."/>
            <person name="Tanaka T."/>
            <person name="Kudoh Y."/>
            <person name="Yamazaki J."/>
            <person name="Kushida N."/>
            <person name="Oguchi A."/>
            <person name="Aoki K."/>
            <person name="Kubota K."/>
            <person name="Nakamura Y."/>
            <person name="Nomura N."/>
            <person name="Sako Y."/>
            <person name="Kikuchi H."/>
        </authorList>
    </citation>
    <scope>NUCLEOTIDE SEQUENCE [LARGE SCALE GENOMIC DNA]</scope>
    <source>
        <strain>ATCC 700893 / DSM 11879 / JCM 9820 / NBRC 100138 / K1</strain>
    </source>
</reference>
<organism>
    <name type="scientific">Aeropyrum pernix (strain ATCC 700893 / DSM 11879 / JCM 9820 / NBRC 100138 / K1)</name>
    <dbReference type="NCBI Taxonomy" id="272557"/>
    <lineage>
        <taxon>Archaea</taxon>
        <taxon>Thermoproteota</taxon>
        <taxon>Thermoprotei</taxon>
        <taxon>Desulfurococcales</taxon>
        <taxon>Desulfurococcaceae</taxon>
        <taxon>Aeropyrum</taxon>
    </lineage>
</organism>
<keyword id="KW-0238">DNA-binding</keyword>
<keyword id="KW-1185">Reference proteome</keyword>
<keyword id="KW-0804">Transcription</keyword>
<keyword id="KW-0805">Transcription regulation</keyword>